<dbReference type="EC" id="2.3.1.129" evidence="1"/>
<dbReference type="EMBL" id="CP000086">
    <property type="protein sequence ID" value="ABC38675.1"/>
    <property type="molecule type" value="Genomic_DNA"/>
</dbReference>
<dbReference type="RefSeq" id="WP_009890458.1">
    <property type="nucleotide sequence ID" value="NZ_CP008785.1"/>
</dbReference>
<dbReference type="PDB" id="4EQY">
    <property type="method" value="X-ray"/>
    <property type="resolution" value="1.80 A"/>
    <property type="chains" value="A/B/C/E/F/G=1-262"/>
</dbReference>
<dbReference type="PDBsum" id="4EQY"/>
<dbReference type="SMR" id="Q2SWY6"/>
<dbReference type="GeneID" id="45121767"/>
<dbReference type="KEGG" id="bte:BTH_I2039"/>
<dbReference type="HOGENOM" id="CLU_061249_0_0_4"/>
<dbReference type="UniPathway" id="UPA00359">
    <property type="reaction ID" value="UER00477"/>
</dbReference>
<dbReference type="EvolutionaryTrace" id="Q2SWY6"/>
<dbReference type="Proteomes" id="UP000001930">
    <property type="component" value="Chromosome I"/>
</dbReference>
<dbReference type="GO" id="GO:0005737">
    <property type="term" value="C:cytoplasm"/>
    <property type="evidence" value="ECO:0007669"/>
    <property type="project" value="UniProtKB-SubCell"/>
</dbReference>
<dbReference type="GO" id="GO:0016020">
    <property type="term" value="C:membrane"/>
    <property type="evidence" value="ECO:0007669"/>
    <property type="project" value="GOC"/>
</dbReference>
<dbReference type="GO" id="GO:0008780">
    <property type="term" value="F:acyl-[acyl-carrier-protein]-UDP-N-acetylglucosamine O-acyltransferase activity"/>
    <property type="evidence" value="ECO:0007669"/>
    <property type="project" value="UniProtKB-UniRule"/>
</dbReference>
<dbReference type="GO" id="GO:0009245">
    <property type="term" value="P:lipid A biosynthetic process"/>
    <property type="evidence" value="ECO:0007669"/>
    <property type="project" value="UniProtKB-UniRule"/>
</dbReference>
<dbReference type="CDD" id="cd03351">
    <property type="entry name" value="LbH_UDP-GlcNAc_AT"/>
    <property type="match status" value="1"/>
</dbReference>
<dbReference type="Gene3D" id="2.160.10.10">
    <property type="entry name" value="Hexapeptide repeat proteins"/>
    <property type="match status" value="1"/>
</dbReference>
<dbReference type="Gene3D" id="1.20.1180.10">
    <property type="entry name" value="Udp N-acetylglucosamine O-acyltransferase, C-terminal domain"/>
    <property type="match status" value="1"/>
</dbReference>
<dbReference type="HAMAP" id="MF_00387">
    <property type="entry name" value="LpxA"/>
    <property type="match status" value="1"/>
</dbReference>
<dbReference type="InterPro" id="IPR029098">
    <property type="entry name" value="Acetyltransf_C"/>
</dbReference>
<dbReference type="InterPro" id="IPR037157">
    <property type="entry name" value="Acetyltransf_C_sf"/>
</dbReference>
<dbReference type="InterPro" id="IPR001451">
    <property type="entry name" value="Hexapep"/>
</dbReference>
<dbReference type="InterPro" id="IPR010137">
    <property type="entry name" value="Lipid_A_LpxA"/>
</dbReference>
<dbReference type="InterPro" id="IPR011004">
    <property type="entry name" value="Trimer_LpxA-like_sf"/>
</dbReference>
<dbReference type="NCBIfam" id="TIGR01852">
    <property type="entry name" value="lipid_A_lpxA"/>
    <property type="match status" value="1"/>
</dbReference>
<dbReference type="NCBIfam" id="NF003657">
    <property type="entry name" value="PRK05289.1"/>
    <property type="match status" value="1"/>
</dbReference>
<dbReference type="PANTHER" id="PTHR43480">
    <property type="entry name" value="ACYL-[ACYL-CARRIER-PROTEIN]--UDP-N-ACETYLGLUCOSAMINE O-ACYLTRANSFERASE"/>
    <property type="match status" value="1"/>
</dbReference>
<dbReference type="PANTHER" id="PTHR43480:SF1">
    <property type="entry name" value="ACYL-[ACYL-CARRIER-PROTEIN]--UDP-N-ACETYLGLUCOSAMINE O-ACYLTRANSFERASE, MITOCHONDRIAL-RELATED"/>
    <property type="match status" value="1"/>
</dbReference>
<dbReference type="Pfam" id="PF13720">
    <property type="entry name" value="Acetyltransf_11"/>
    <property type="match status" value="1"/>
</dbReference>
<dbReference type="Pfam" id="PF00132">
    <property type="entry name" value="Hexapep"/>
    <property type="match status" value="2"/>
</dbReference>
<dbReference type="PIRSF" id="PIRSF000456">
    <property type="entry name" value="UDP-GlcNAc_acltr"/>
    <property type="match status" value="1"/>
</dbReference>
<dbReference type="SUPFAM" id="SSF51161">
    <property type="entry name" value="Trimeric LpxA-like enzymes"/>
    <property type="match status" value="1"/>
</dbReference>
<dbReference type="PROSITE" id="PS00101">
    <property type="entry name" value="HEXAPEP_TRANSFERASES"/>
    <property type="match status" value="1"/>
</dbReference>
<name>LPXA_BURTA</name>
<accession>Q2SWY6</accession>
<gene>
    <name evidence="1" type="primary">lpxA</name>
    <name type="ordered locus">BTH_I2039</name>
</gene>
<sequence length="262" mass="27874">MSRIHPTAIIEPGAQLHETVEVGPYAIVGSNVTIGARTTIGSHSVIEGHTTIGEDNRIGHYASVGGRPQDMKYKDEPTRLVIGDRNTIREFTTIHTGTVQDAGVTTLGDDNWIMAYVHIGHDCRVGSHVVLSSNAQMAGHVEIGDWAIVGGMSGVHQYVRIGAHSMLGGASALVQDIPPFVIAAGNKAEPHGINVEGLRRRGFSPDAISALRSAYRILYKNSLSLEEAKVQLSELAQAGGDGDAAVKALVDFVESSQRGIIR</sequence>
<protein>
    <recommendedName>
        <fullName evidence="1">Acyl-[acyl-carrier-protein]--UDP-N-acetylglucosamine O-acyltransferase</fullName>
        <shortName evidence="1">UDP-N-acetylglucosamine acyltransferase</shortName>
        <ecNumber evidence="1">2.3.1.129</ecNumber>
    </recommendedName>
</protein>
<feature type="chain" id="PRO_1000013160" description="Acyl-[acyl-carrier-protein]--UDP-N-acetylglucosamine O-acyltransferase">
    <location>
        <begin position="1"/>
        <end position="262"/>
    </location>
</feature>
<feature type="strand" evidence="2">
    <location>
        <begin position="32"/>
        <end position="34"/>
    </location>
</feature>
<feature type="strand" evidence="2">
    <location>
        <begin position="48"/>
        <end position="52"/>
    </location>
</feature>
<feature type="strand" evidence="2">
    <location>
        <begin position="63"/>
        <end position="66"/>
    </location>
</feature>
<feature type="strand" evidence="2">
    <location>
        <begin position="79"/>
        <end position="82"/>
    </location>
</feature>
<feature type="strand" evidence="2">
    <location>
        <begin position="93"/>
        <end position="95"/>
    </location>
</feature>
<feature type="turn" evidence="2">
    <location>
        <begin position="99"/>
        <end position="102"/>
    </location>
</feature>
<feature type="strand" evidence="2">
    <location>
        <begin position="103"/>
        <end position="107"/>
    </location>
</feature>
<feature type="strand" evidence="2">
    <location>
        <begin position="175"/>
        <end position="177"/>
    </location>
</feature>
<feature type="strand" evidence="2">
    <location>
        <begin position="181"/>
        <end position="184"/>
    </location>
</feature>
<feature type="turn" evidence="2">
    <location>
        <begin position="185"/>
        <end position="188"/>
    </location>
</feature>
<feature type="strand" evidence="2">
    <location>
        <begin position="189"/>
        <end position="193"/>
    </location>
</feature>
<feature type="helix" evidence="2">
    <location>
        <begin position="195"/>
        <end position="200"/>
    </location>
</feature>
<feature type="helix" evidence="2">
    <location>
        <begin position="205"/>
        <end position="219"/>
    </location>
</feature>
<feature type="helix" evidence="2">
    <location>
        <begin position="225"/>
        <end position="235"/>
    </location>
</feature>
<feature type="strand" evidence="2">
    <location>
        <begin position="238"/>
        <end position="240"/>
    </location>
</feature>
<feature type="helix" evidence="2">
    <location>
        <begin position="243"/>
        <end position="254"/>
    </location>
</feature>
<keyword id="KW-0002">3D-structure</keyword>
<keyword id="KW-0012">Acyltransferase</keyword>
<keyword id="KW-0963">Cytoplasm</keyword>
<keyword id="KW-0441">Lipid A biosynthesis</keyword>
<keyword id="KW-0444">Lipid biosynthesis</keyword>
<keyword id="KW-0443">Lipid metabolism</keyword>
<keyword id="KW-0677">Repeat</keyword>
<keyword id="KW-0808">Transferase</keyword>
<proteinExistence type="evidence at protein level"/>
<organism>
    <name type="scientific">Burkholderia thailandensis (strain ATCC 700388 / DSM 13276 / CCUG 48851 / CIP 106301 / E264)</name>
    <dbReference type="NCBI Taxonomy" id="271848"/>
    <lineage>
        <taxon>Bacteria</taxon>
        <taxon>Pseudomonadati</taxon>
        <taxon>Pseudomonadota</taxon>
        <taxon>Betaproteobacteria</taxon>
        <taxon>Burkholderiales</taxon>
        <taxon>Burkholderiaceae</taxon>
        <taxon>Burkholderia</taxon>
        <taxon>pseudomallei group</taxon>
    </lineage>
</organism>
<reference key="1">
    <citation type="journal article" date="2005" name="BMC Genomics">
        <title>Bacterial genome adaptation to niches: divergence of the potential virulence genes in three Burkholderia species of different survival strategies.</title>
        <authorList>
            <person name="Kim H.S."/>
            <person name="Schell M.A."/>
            <person name="Yu Y."/>
            <person name="Ulrich R.L."/>
            <person name="Sarria S.H."/>
            <person name="Nierman W.C."/>
            <person name="DeShazer D."/>
        </authorList>
    </citation>
    <scope>NUCLEOTIDE SEQUENCE [LARGE SCALE GENOMIC DNA]</scope>
    <source>
        <strain>ATCC 700388 / DSM 13276 / CCUG 48851 / CIP 106301 / E264</strain>
    </source>
</reference>
<comment type="function">
    <text evidence="1">Involved in the biosynthesis of lipid A, a phosphorylated glycolipid that anchors the lipopolysaccharide to the outer membrane of the cell.</text>
</comment>
<comment type="catalytic activity">
    <reaction evidence="1">
        <text>a (3R)-hydroxyacyl-[ACP] + UDP-N-acetyl-alpha-D-glucosamine = a UDP-3-O-[(3R)-3-hydroxyacyl]-N-acetyl-alpha-D-glucosamine + holo-[ACP]</text>
        <dbReference type="Rhea" id="RHEA:67812"/>
        <dbReference type="Rhea" id="RHEA-COMP:9685"/>
        <dbReference type="Rhea" id="RHEA-COMP:9945"/>
        <dbReference type="ChEBI" id="CHEBI:57705"/>
        <dbReference type="ChEBI" id="CHEBI:64479"/>
        <dbReference type="ChEBI" id="CHEBI:78827"/>
        <dbReference type="ChEBI" id="CHEBI:173225"/>
        <dbReference type="EC" id="2.3.1.129"/>
    </reaction>
</comment>
<comment type="pathway">
    <text evidence="1">Glycolipid biosynthesis; lipid IV(A) biosynthesis; lipid IV(A) from (3R)-3-hydroxytetradecanoyl-[acyl-carrier-protein] and UDP-N-acetyl-alpha-D-glucosamine: step 1/6.</text>
</comment>
<comment type="subunit">
    <text evidence="1">Homotrimer.</text>
</comment>
<comment type="subcellular location">
    <subcellularLocation>
        <location evidence="1">Cytoplasm</location>
    </subcellularLocation>
</comment>
<comment type="similarity">
    <text evidence="1">Belongs to the transferase hexapeptide repeat family. LpxA subfamily.</text>
</comment>
<evidence type="ECO:0000255" key="1">
    <source>
        <dbReference type="HAMAP-Rule" id="MF_00387"/>
    </source>
</evidence>
<evidence type="ECO:0007829" key="2">
    <source>
        <dbReference type="PDB" id="4EQY"/>
    </source>
</evidence>